<sequence>MGVPGLYRHLSQKCPKIVSDVIEDETTIVDGEEIPGSDYSAPNPNGELDNLYLDMNGIVHPCTHPEGEEAPPSEDEMLLAVFKYTERVLNVCRPRKVLMMAIDGVAPRAKMNQQRARRFRSAKDAAIEAESTLESELKAKTIELQSSGEKGKSLETILDEFKQGLVNKPGKWDSNAITPGTPFMEKLAAALRYWVGYKLNTEPGWRDLKVVISDATVPGEGEHKIMEFIRSQRGDPTYNANTSHCIYGLDADLIFLGLATHEPKFKLLREDVFRQNKTAGHQKKPFIWLNIDILREYLREDLRFTHPQTKIPFDLERAIDDWVFLCFFVGNDFLPHLPACDVRDGSINVLVNQWKNGMTRWKDYITCDGHVNLAQAQDLLKNFATQEQRILVHQEQDRVEYEKSQANKAAKQQAHRDSKKLRQQGEQAALESMPLYDTKGESVGDVQLTNRELVGQRNDITLANLANQDAADKLRFMLKRGSDTGAEEPAKRAKIEEEPKEAESNSSEATPPTANPSIANDADLSNPNVTVHETTGYADHVQFHKSGYTERYYMNKFHAKEDEVDNLRRQVAEEYMKGVCWVLMYYYHGCQSWSWFYPYHYAPLAGDFDQISNMKVEFGESAPFRPYEQLMSVLPAASGHNLPAVFRPLMSEENSPIIDYYPENFQLDLNGKKQEWKAVVLLPFINADHLLEHVQAKYTELTPEEKDRNTLREEIVIFHRLGKYAKTLEKRGLMEKGVIVSKKPLVLNSHETSGLAGTVERQNEADRTSSKPHLTFPLNVSTDQTMPSFEADKNMAMTLEYKIPKLEYENKSMLLQGYIPPKYTLSDEEREAIRNRERQRRGGQQDSRLFSNTDHRQQQELLMNGSYLAFKKLSLRDQPPPAKEDWMLNDPKLAGDRGNGGYNNRGGFNNHRGGRGGFNNRGRGGFNHGGGGFNNSRGGYGGGGGGYGGGGGQGYGGGQGYGGGQGYGGGQGYGGGGYGGGQGYGGGGYGGGYGGGHRGGHRGGRGGHRY</sequence>
<protein>
    <recommendedName>
        <fullName>5'-3' exoribonuclease 2</fullName>
        <ecNumber>3.1.13.-</ecNumber>
    </recommendedName>
</protein>
<proteinExistence type="inferred from homology"/>
<feature type="initiator methionine" description="Removed" evidence="1">
    <location>
        <position position="1"/>
    </location>
</feature>
<feature type="chain" id="PRO_0000249930" description="5'-3' exoribonuclease 2">
    <location>
        <begin position="2"/>
        <end position="1010"/>
    </location>
</feature>
<feature type="region of interest" description="Disordered" evidence="4">
    <location>
        <begin position="402"/>
        <end position="437"/>
    </location>
</feature>
<feature type="region of interest" description="Disordered" evidence="4">
    <location>
        <begin position="481"/>
        <end position="530"/>
    </location>
</feature>
<feature type="region of interest" description="Disordered" evidence="4">
    <location>
        <begin position="754"/>
        <end position="781"/>
    </location>
</feature>
<feature type="region of interest" description="Disordered" evidence="4">
    <location>
        <begin position="879"/>
        <end position="923"/>
    </location>
</feature>
<feature type="region of interest" description="Disordered" evidence="4">
    <location>
        <begin position="990"/>
        <end position="1010"/>
    </location>
</feature>
<feature type="compositionally biased region" description="Basic and acidic residues" evidence="4">
    <location>
        <begin position="488"/>
        <end position="503"/>
    </location>
</feature>
<feature type="compositionally biased region" description="Polar residues" evidence="4">
    <location>
        <begin position="504"/>
        <end position="530"/>
    </location>
</feature>
<feature type="compositionally biased region" description="Basic residues" evidence="4">
    <location>
        <begin position="998"/>
        <end position="1010"/>
    </location>
</feature>
<comment type="function">
    <text evidence="2 3">Possesses 5'-&gt;3' exoribonuclease activity (By similarity). Required for the processing of nuclear mRNA and rRNA precursors. May promote the termination of transcription by RNA polymerase II (By similarity). Essential for vegetative cell growth and chromosome segregation (By similarity).</text>
</comment>
<comment type="subunit">
    <text evidence="2">Interacts with RAI1; the interaction is direct, stabilizes RAT1 protein structure and may stimulate its exoribonuclease activity (By similarity). The interaction also stimulates RAI1 pyrophosphohydrolase activity, probably by recruiting it to mRNA substrates (By similarity).</text>
</comment>
<comment type="subcellular location">
    <subcellularLocation>
        <location evidence="1">Nucleus</location>
    </subcellularLocation>
</comment>
<comment type="similarity">
    <text evidence="5">Belongs to the 5'-3' exonuclease family. XRN2/RAT1 subfamily.</text>
</comment>
<reference key="1">
    <citation type="journal article" date="2004" name="Nature">
        <title>Genome evolution in yeasts.</title>
        <authorList>
            <person name="Dujon B."/>
            <person name="Sherman D."/>
            <person name="Fischer G."/>
            <person name="Durrens P."/>
            <person name="Casaregola S."/>
            <person name="Lafontaine I."/>
            <person name="de Montigny J."/>
            <person name="Marck C."/>
            <person name="Neuveglise C."/>
            <person name="Talla E."/>
            <person name="Goffard N."/>
            <person name="Frangeul L."/>
            <person name="Aigle M."/>
            <person name="Anthouard V."/>
            <person name="Babour A."/>
            <person name="Barbe V."/>
            <person name="Barnay S."/>
            <person name="Blanchin S."/>
            <person name="Beckerich J.-M."/>
            <person name="Beyne E."/>
            <person name="Bleykasten C."/>
            <person name="Boisrame A."/>
            <person name="Boyer J."/>
            <person name="Cattolico L."/>
            <person name="Confanioleri F."/>
            <person name="de Daruvar A."/>
            <person name="Despons L."/>
            <person name="Fabre E."/>
            <person name="Fairhead C."/>
            <person name="Ferry-Dumazet H."/>
            <person name="Groppi A."/>
            <person name="Hantraye F."/>
            <person name="Hennequin C."/>
            <person name="Jauniaux N."/>
            <person name="Joyet P."/>
            <person name="Kachouri R."/>
            <person name="Kerrest A."/>
            <person name="Koszul R."/>
            <person name="Lemaire M."/>
            <person name="Lesur I."/>
            <person name="Ma L."/>
            <person name="Muller H."/>
            <person name="Nicaud J.-M."/>
            <person name="Nikolski M."/>
            <person name="Oztas S."/>
            <person name="Ozier-Kalogeropoulos O."/>
            <person name="Pellenz S."/>
            <person name="Potier S."/>
            <person name="Richard G.-F."/>
            <person name="Straub M.-L."/>
            <person name="Suleau A."/>
            <person name="Swennen D."/>
            <person name="Tekaia F."/>
            <person name="Wesolowski-Louvel M."/>
            <person name="Westhof E."/>
            <person name="Wirth B."/>
            <person name="Zeniou-Meyer M."/>
            <person name="Zivanovic Y."/>
            <person name="Bolotin-Fukuhara M."/>
            <person name="Thierry A."/>
            <person name="Bouchier C."/>
            <person name="Caudron B."/>
            <person name="Scarpelli C."/>
            <person name="Gaillardin C."/>
            <person name="Weissenbach J."/>
            <person name="Wincker P."/>
            <person name="Souciet J.-L."/>
        </authorList>
    </citation>
    <scope>NUCLEOTIDE SEQUENCE [LARGE SCALE GENOMIC DNA]</scope>
    <source>
        <strain>CLIB 122 / E 150</strain>
    </source>
</reference>
<accession>Q6C961</accession>
<dbReference type="EC" id="3.1.13.-"/>
<dbReference type="EMBL" id="CR382130">
    <property type="protein sequence ID" value="CAG80989.1"/>
    <property type="molecule type" value="Genomic_DNA"/>
</dbReference>
<dbReference type="RefSeq" id="XP_502801.1">
    <property type="nucleotide sequence ID" value="XM_502801.1"/>
</dbReference>
<dbReference type="SMR" id="Q6C961"/>
<dbReference type="FunCoup" id="Q6C961">
    <property type="interactions" value="1112"/>
</dbReference>
<dbReference type="STRING" id="284591.Q6C961"/>
<dbReference type="EnsemblFungi" id="CAG80989">
    <property type="protein sequence ID" value="CAG80989"/>
    <property type="gene ID" value="YALI0_D13750g"/>
</dbReference>
<dbReference type="KEGG" id="yli:2910260"/>
<dbReference type="VEuPathDB" id="FungiDB:YALI0_D13750g"/>
<dbReference type="HOGENOM" id="CLU_006038_1_1_1"/>
<dbReference type="InParanoid" id="Q6C961"/>
<dbReference type="OMA" id="WVALYYY"/>
<dbReference type="OrthoDB" id="114642at4891"/>
<dbReference type="Proteomes" id="UP000001300">
    <property type="component" value="Chromosome D"/>
</dbReference>
<dbReference type="GO" id="GO:0090730">
    <property type="term" value="C:Las1 complex"/>
    <property type="evidence" value="ECO:0007669"/>
    <property type="project" value="EnsemblFungi"/>
</dbReference>
<dbReference type="GO" id="GO:0005634">
    <property type="term" value="C:nucleus"/>
    <property type="evidence" value="ECO:0000318"/>
    <property type="project" value="GO_Central"/>
</dbReference>
<dbReference type="GO" id="GO:0110103">
    <property type="term" value="C:RNA polymerase II termination complex"/>
    <property type="evidence" value="ECO:0007669"/>
    <property type="project" value="EnsemblFungi"/>
</dbReference>
<dbReference type="GO" id="GO:0004534">
    <property type="term" value="F:5'-3' RNA exonuclease activity"/>
    <property type="evidence" value="ECO:0000318"/>
    <property type="project" value="GO_Central"/>
</dbReference>
<dbReference type="GO" id="GO:0003723">
    <property type="term" value="F:RNA binding"/>
    <property type="evidence" value="ECO:0000318"/>
    <property type="project" value="GO_Central"/>
</dbReference>
<dbReference type="GO" id="GO:0019843">
    <property type="term" value="F:rRNA binding"/>
    <property type="evidence" value="ECO:0007669"/>
    <property type="project" value="EnsemblFungi"/>
</dbReference>
<dbReference type="GO" id="GO:0000448">
    <property type="term" value="P:cleavage in ITS2 between 5.8S rRNA and LSU-rRNA of tricistronic rRNA transcript (SSU-rRNA, 5.8S rRNA, LSU-rRNA)"/>
    <property type="evidence" value="ECO:0007669"/>
    <property type="project" value="EnsemblFungi"/>
</dbReference>
<dbReference type="GO" id="GO:0000398">
    <property type="term" value="P:mRNA splicing, via spliceosome"/>
    <property type="evidence" value="ECO:0007669"/>
    <property type="project" value="EnsemblFungi"/>
</dbReference>
<dbReference type="GO" id="GO:0110155">
    <property type="term" value="P:NAD-cap decapping"/>
    <property type="evidence" value="ECO:0007669"/>
    <property type="project" value="EnsemblFungi"/>
</dbReference>
<dbReference type="GO" id="GO:0034244">
    <property type="term" value="P:negative regulation of transcription elongation by RNA polymerase II"/>
    <property type="evidence" value="ECO:0007669"/>
    <property type="project" value="EnsemblFungi"/>
</dbReference>
<dbReference type="GO" id="GO:0071028">
    <property type="term" value="P:nuclear mRNA surveillance"/>
    <property type="evidence" value="ECO:0007669"/>
    <property type="project" value="EnsemblFungi"/>
</dbReference>
<dbReference type="GO" id="GO:0071035">
    <property type="term" value="P:nuclear polyadenylation-dependent rRNA catabolic process"/>
    <property type="evidence" value="ECO:0007669"/>
    <property type="project" value="EnsemblFungi"/>
</dbReference>
<dbReference type="GO" id="GO:0000956">
    <property type="term" value="P:nuclear-transcribed mRNA catabolic process"/>
    <property type="evidence" value="ECO:0000318"/>
    <property type="project" value="GO_Central"/>
</dbReference>
<dbReference type="GO" id="GO:1904595">
    <property type="term" value="P:positive regulation of termination of RNA polymerase II transcription"/>
    <property type="evidence" value="ECO:0007669"/>
    <property type="project" value="EnsemblFungi"/>
</dbReference>
<dbReference type="GO" id="GO:0043144">
    <property type="term" value="P:sno(s)RNA processing"/>
    <property type="evidence" value="ECO:0007669"/>
    <property type="project" value="EnsemblFungi"/>
</dbReference>
<dbReference type="GO" id="GO:0030847">
    <property type="term" value="P:termination of RNA polymerase II transcription, exosome-dependent"/>
    <property type="evidence" value="ECO:0007669"/>
    <property type="project" value="EnsemblFungi"/>
</dbReference>
<dbReference type="GO" id="GO:0030846">
    <property type="term" value="P:termination of RNA polymerase II transcription, poly(A)-coupled"/>
    <property type="evidence" value="ECO:0007669"/>
    <property type="project" value="EnsemblFungi"/>
</dbReference>
<dbReference type="CDD" id="cd18673">
    <property type="entry name" value="PIN_XRN1-2-like"/>
    <property type="match status" value="1"/>
</dbReference>
<dbReference type="FunFam" id="1.25.40.1050:FF:000002">
    <property type="entry name" value="5'-3' exoribonuclease"/>
    <property type="match status" value="1"/>
</dbReference>
<dbReference type="FunFam" id="3.40.50.12390:FF:000005">
    <property type="entry name" value="5'-3' exoribonuclease 2"/>
    <property type="match status" value="1"/>
</dbReference>
<dbReference type="Gene3D" id="1.25.40.1050">
    <property type="match status" value="1"/>
</dbReference>
<dbReference type="Gene3D" id="3.40.50.12390">
    <property type="match status" value="2"/>
</dbReference>
<dbReference type="InterPro" id="IPR027073">
    <property type="entry name" value="5_3_exoribonuclease"/>
</dbReference>
<dbReference type="InterPro" id="IPR041412">
    <property type="entry name" value="Xrn1_helical"/>
</dbReference>
<dbReference type="InterPro" id="IPR004859">
    <property type="entry name" value="Xrn1_N"/>
</dbReference>
<dbReference type="InterPro" id="IPR017151">
    <property type="entry name" value="Xrn2/3/4"/>
</dbReference>
<dbReference type="PANTHER" id="PTHR12341:SF41">
    <property type="entry name" value="5'-3' EXORIBONUCLEASE 2"/>
    <property type="match status" value="1"/>
</dbReference>
<dbReference type="PANTHER" id="PTHR12341">
    <property type="entry name" value="5'-&gt;3' EXORIBONUCLEASE"/>
    <property type="match status" value="1"/>
</dbReference>
<dbReference type="Pfam" id="PF17846">
    <property type="entry name" value="XRN_M"/>
    <property type="match status" value="1"/>
</dbReference>
<dbReference type="Pfam" id="PF03159">
    <property type="entry name" value="XRN_N"/>
    <property type="match status" value="1"/>
</dbReference>
<dbReference type="PIRSF" id="PIRSF037239">
    <property type="entry name" value="Exonuclease_Xrn2"/>
    <property type="match status" value="1"/>
</dbReference>
<gene>
    <name type="primary">RAT1</name>
    <name type="ordered locus">YALI0D13750g</name>
</gene>
<organism>
    <name type="scientific">Yarrowia lipolytica (strain CLIB 122 / E 150)</name>
    <name type="common">Yeast</name>
    <name type="synonym">Candida lipolytica</name>
    <dbReference type="NCBI Taxonomy" id="284591"/>
    <lineage>
        <taxon>Eukaryota</taxon>
        <taxon>Fungi</taxon>
        <taxon>Dikarya</taxon>
        <taxon>Ascomycota</taxon>
        <taxon>Saccharomycotina</taxon>
        <taxon>Dipodascomycetes</taxon>
        <taxon>Dipodascales</taxon>
        <taxon>Dipodascales incertae sedis</taxon>
        <taxon>Yarrowia</taxon>
    </lineage>
</organism>
<keyword id="KW-0269">Exonuclease</keyword>
<keyword id="KW-0378">Hydrolase</keyword>
<keyword id="KW-0507">mRNA processing</keyword>
<keyword id="KW-0540">Nuclease</keyword>
<keyword id="KW-0539">Nucleus</keyword>
<keyword id="KW-1185">Reference proteome</keyword>
<keyword id="KW-0698">rRNA processing</keyword>
<keyword id="KW-0804">Transcription</keyword>
<keyword id="KW-0805">Transcription regulation</keyword>
<keyword id="KW-0806">Transcription termination</keyword>
<evidence type="ECO:0000250" key="1"/>
<evidence type="ECO:0000250" key="2">
    <source>
        <dbReference type="UniProtKB" id="P40848"/>
    </source>
</evidence>
<evidence type="ECO:0000250" key="3">
    <source>
        <dbReference type="UniProtKB" id="Q02792"/>
    </source>
</evidence>
<evidence type="ECO:0000256" key="4">
    <source>
        <dbReference type="SAM" id="MobiDB-lite"/>
    </source>
</evidence>
<evidence type="ECO:0000305" key="5"/>
<name>XRN2_YARLI</name>